<accession>P25479</accession>
<organism>
    <name type="scientific">Escherichia phage P2</name>
    <name type="common">Bacteriophage P2</name>
    <dbReference type="NCBI Taxonomy" id="2905681"/>
    <lineage>
        <taxon>Viruses</taxon>
        <taxon>Duplodnaviria</taxon>
        <taxon>Heunggongvirae</taxon>
        <taxon>Uroviricota</taxon>
        <taxon>Caudoviricetes</taxon>
        <taxon>Peduoviridae</taxon>
        <taxon>Peduovirus</taxon>
        <taxon>Peduovirus P2</taxon>
    </lineage>
</organism>
<organismHost>
    <name type="scientific">Enterobacteriaceae</name>
    <dbReference type="NCBI Taxonomy" id="543"/>
</organismHost>
<reference key="1">
    <citation type="journal article" date="1991" name="Nucleic Acids Res.">
        <title>Nucleotide sequence of the DNA packaging and capsid synthesis genes of bacteriophage P2.</title>
        <authorList>
            <person name="Linderoth N.A."/>
            <person name="Ziermann R."/>
            <person name="Haggaard-Ljungquist E."/>
            <person name="Christie G.E."/>
            <person name="Calendar R."/>
        </authorList>
    </citation>
    <scope>NUCLEOTIDE SEQUENCE [GENOMIC DNA]</scope>
</reference>
<gene>
    <name type="primary">P</name>
</gene>
<keyword id="KW-0067">ATP-binding</keyword>
<keyword id="KW-0547">Nucleotide-binding</keyword>
<keyword id="KW-1185">Reference proteome</keyword>
<keyword id="KW-0231">Viral genome packaging</keyword>
<keyword id="KW-1188">Viral release from host cell</keyword>
<dbReference type="EMBL" id="AF063097">
    <property type="protein sequence ID" value="AAD03269.1"/>
    <property type="molecule type" value="Genomic_DNA"/>
</dbReference>
<dbReference type="PIR" id="S22797">
    <property type="entry name" value="S16411"/>
</dbReference>
<dbReference type="RefSeq" id="NP_046758.1">
    <property type="nucleotide sequence ID" value="NC_001895.1"/>
</dbReference>
<dbReference type="GeneID" id="77440789"/>
<dbReference type="KEGG" id="vg:77440789"/>
<dbReference type="Proteomes" id="UP000009092">
    <property type="component" value="Genome"/>
</dbReference>
<dbReference type="GO" id="GO:0005524">
    <property type="term" value="F:ATP binding"/>
    <property type="evidence" value="ECO:0007669"/>
    <property type="project" value="UniProtKB-KW"/>
</dbReference>
<dbReference type="Gene3D" id="3.30.420.240">
    <property type="match status" value="1"/>
</dbReference>
<dbReference type="Gene3D" id="3.40.50.300">
    <property type="entry name" value="P-loop containing nucleotide triphosphate hydrolases"/>
    <property type="match status" value="1"/>
</dbReference>
<dbReference type="InterPro" id="IPR010332">
    <property type="entry name" value="ATPase_terminase-su_N"/>
</dbReference>
<dbReference type="InterPro" id="IPR027417">
    <property type="entry name" value="P-loop_NTPase"/>
</dbReference>
<dbReference type="InterPro" id="IPR035421">
    <property type="entry name" value="Terminase_6C"/>
</dbReference>
<dbReference type="Pfam" id="PF06056">
    <property type="entry name" value="Terminase_5"/>
    <property type="match status" value="1"/>
</dbReference>
<dbReference type="Pfam" id="PF17289">
    <property type="entry name" value="Terminase_6C"/>
    <property type="match status" value="1"/>
</dbReference>
<dbReference type="Pfam" id="PF03237">
    <property type="entry name" value="Terminase_6N"/>
    <property type="match status" value="1"/>
</dbReference>
<proteinExistence type="predicted"/>
<evidence type="ECO:0000256" key="1">
    <source>
        <dbReference type="SAM" id="MobiDB-lite"/>
    </source>
</evidence>
<evidence type="ECO:0000305" key="2"/>
<protein>
    <recommendedName>
        <fullName>Terminase, ATPase subunit</fullName>
    </recommendedName>
    <alternativeName>
        <fullName>GpP</fullName>
    </alternativeName>
</protein>
<feature type="chain" id="PRO_0000165259" description="Terminase, ATPase subunit">
    <location>
        <begin position="1"/>
        <end position="590"/>
    </location>
</feature>
<feature type="region of interest" description="Disordered" evidence="1">
    <location>
        <begin position="105"/>
        <end position="125"/>
    </location>
</feature>
<name>VPP_BPP2</name>
<comment type="function">
    <text>P protein is probably the ATPase subunit of the terminase which directs cos cleavage. The Q, P and M proteins are needed to package DNA into proheads and for the conversion of proheads to capsids.</text>
</comment>
<comment type="similarity">
    <text evidence="2">To phage HP1 protein ORF16.</text>
</comment>
<sequence>MTITTDTTLLHDPRRQAALLYWQGFSVPQIAAMLQMKRPTVQSWKQRDGWDSVAPISRVEMSLEARLTQLIIKPQKTGGDFKEIDLLGRQIERLARVNRYSQTGNEADLNPNVANRNKGGRRKPKKNFFSDEAIEKLEQIFFEQSFDYQLHWYRAGLEHRIRDILKSRQIGATFYFSREALLRALKTGHNQIFLSASKTQAYVFREYIIAFARLVDVDLTGDPIVLGNNGAKLIFLGTNSNTAQSHNGDLYVDEIFWIPNFQVLRKVASGMASQSHLRSTYFSTPSTLAHDAYPFWSGELFNRGRASAAERVEIDVSHNALAGGLLCADGQWRQIVTIEDALKGGCTLFDIEQLKRENSADDFKNLFMCEFVDDKASVFPFEELQRCMVDTLEEWEDYAPFAANPFGSRPVWIGYDPSHRGDSAGCVVLAPPVVAGGKFRILERHQWKGMDFATQAESIRKLTEKYNVEYIGIDATGLGVGVFQLVRSFYPAARDIRYTPEMKTAMVLKAKDVIRRGCLEYDVSATDITSSFMAIRKTMTSSGRSATYEASRSEEASHADLAWATMHALLNEPLTAGISTPLTSTILEFY</sequence>